<reference key="1">
    <citation type="journal article" date="2007" name="Proc. Natl. Acad. Sci. U.S.A.">
        <title>Genome sequencing and comparative analysis of Saccharomyces cerevisiae strain YJM789.</title>
        <authorList>
            <person name="Wei W."/>
            <person name="McCusker J.H."/>
            <person name="Hyman R.W."/>
            <person name="Jones T."/>
            <person name="Ning Y."/>
            <person name="Cao Z."/>
            <person name="Gu Z."/>
            <person name="Bruno D."/>
            <person name="Miranda M."/>
            <person name="Nguyen M."/>
            <person name="Wilhelmy J."/>
            <person name="Komp C."/>
            <person name="Tamse R."/>
            <person name="Wang X."/>
            <person name="Jia P."/>
            <person name="Luedi P."/>
            <person name="Oefner P.J."/>
            <person name="David L."/>
            <person name="Dietrich F.S."/>
            <person name="Li Y."/>
            <person name="Davis R.W."/>
            <person name="Steinmetz L.M."/>
        </authorList>
    </citation>
    <scope>NUCLEOTIDE SEQUENCE [LARGE SCALE GENOMIC DNA]</scope>
    <source>
        <strain>YJM789</strain>
    </source>
</reference>
<reference key="2">
    <citation type="journal article" date="2008" name="Genetics">
        <title>Sequential elimination of major-effect contributors identifies additional quantitative trait loci conditioning high-temperature growth in yeast.</title>
        <authorList>
            <person name="Sinha H."/>
            <person name="David L."/>
            <person name="Pascon R.C."/>
            <person name="Clauder-Muenster S."/>
            <person name="Krishnakumar S."/>
            <person name="Nguyen M."/>
            <person name="Shi G."/>
            <person name="Dean J."/>
            <person name="Davis R.W."/>
            <person name="Oefner P.J."/>
            <person name="McCusker J.H."/>
            <person name="Steinmetz L.M."/>
        </authorList>
    </citation>
    <scope>NUCLEOTIDE SEQUENCE [GENOMIC DNA] OF 352-644</scope>
</reference>
<proteinExistence type="inferred from homology"/>
<protein>
    <recommendedName>
        <fullName>Uncharacterized vacuolar membrane protein SCY_4679</fullName>
    </recommendedName>
</protein>
<organism>
    <name type="scientific">Saccharomyces cerevisiae (strain YJM789)</name>
    <name type="common">Baker's yeast</name>
    <dbReference type="NCBI Taxonomy" id="307796"/>
    <lineage>
        <taxon>Eukaryota</taxon>
        <taxon>Fungi</taxon>
        <taxon>Dikarya</taxon>
        <taxon>Ascomycota</taxon>
        <taxon>Saccharomycotina</taxon>
        <taxon>Saccharomycetes</taxon>
        <taxon>Saccharomycetales</taxon>
        <taxon>Saccharomycetaceae</taxon>
        <taxon>Saccharomyces</taxon>
    </lineage>
</organism>
<comment type="subcellular location">
    <subcellularLocation>
        <location evidence="1">Vacuole membrane</location>
        <topology evidence="1">Multi-pass membrane protein</topology>
    </subcellularLocation>
</comment>
<gene>
    <name type="ORF">SCY_4679</name>
</gene>
<feature type="chain" id="PRO_0000378317" description="Uncharacterized vacuolar membrane protein SCY_4679">
    <location>
        <begin position="1"/>
        <end position="644"/>
    </location>
</feature>
<feature type="topological domain" description="Cytoplasmic" evidence="1">
    <location>
        <begin position="1"/>
        <end position="90"/>
    </location>
</feature>
<feature type="transmembrane region" description="Helical" evidence="3">
    <location>
        <begin position="91"/>
        <end position="111"/>
    </location>
</feature>
<feature type="topological domain" description="Vacuolar" evidence="1">
    <location>
        <begin position="112"/>
        <end position="122"/>
    </location>
</feature>
<feature type="transmembrane region" description="Helical" evidence="3">
    <location>
        <begin position="123"/>
        <end position="143"/>
    </location>
</feature>
<feature type="topological domain" description="Cytoplasmic" evidence="1">
    <location>
        <begin position="144"/>
        <end position="147"/>
    </location>
</feature>
<feature type="transmembrane region" description="Helical" evidence="3">
    <location>
        <begin position="148"/>
        <end position="168"/>
    </location>
</feature>
<feature type="topological domain" description="Vacuolar" evidence="1">
    <location>
        <begin position="169"/>
        <end position="174"/>
    </location>
</feature>
<feature type="transmembrane region" description="Helical" evidence="3">
    <location>
        <begin position="175"/>
        <end position="195"/>
    </location>
</feature>
<feature type="topological domain" description="Cytoplasmic" evidence="1">
    <location>
        <begin position="196"/>
        <end position="271"/>
    </location>
</feature>
<feature type="transmembrane region" description="Helical" evidence="3">
    <location>
        <begin position="272"/>
        <end position="292"/>
    </location>
</feature>
<feature type="topological domain" description="Vacuolar" evidence="1">
    <location>
        <begin position="293"/>
        <end position="644"/>
    </location>
</feature>
<feature type="domain" description="AB hydrolase-1" evidence="3">
    <location>
        <begin position="348"/>
        <end position="619"/>
    </location>
</feature>
<feature type="region of interest" description="Disordered" evidence="4">
    <location>
        <begin position="1"/>
        <end position="39"/>
    </location>
</feature>
<feature type="region of interest" description="Disordered" evidence="4">
    <location>
        <begin position="225"/>
        <end position="251"/>
    </location>
</feature>
<feature type="region of interest" description="Disordered" evidence="4">
    <location>
        <begin position="469"/>
        <end position="492"/>
    </location>
</feature>
<feature type="compositionally biased region" description="Basic and acidic residues" evidence="4">
    <location>
        <begin position="9"/>
        <end position="26"/>
    </location>
</feature>
<feature type="compositionally biased region" description="Polar residues" evidence="4">
    <location>
        <begin position="239"/>
        <end position="251"/>
    </location>
</feature>
<feature type="modified residue" description="Phosphoserine" evidence="2">
    <location>
        <position position="22"/>
    </location>
</feature>
<feature type="modified residue" description="Phosphoserine" evidence="2">
    <location>
        <position position="56"/>
    </location>
</feature>
<feature type="modified residue" description="Phosphoserine" evidence="2">
    <location>
        <position position="63"/>
    </location>
</feature>
<feature type="modified residue" description="Phosphoserine" evidence="2">
    <location>
        <position position="244"/>
    </location>
</feature>
<name>YNL5_YEAS7</name>
<sequence length="644" mass="74138">MKANGLDNDPARTRMERTDIDSEHPEAQPLLNNNHRTLGAGSANGPAVNEGRDIESDGFIKDSLFQIRKGYRIFIHNSKWILNILILINTIWLVTTLISDFFFNINILFGFSNRYASFNDLTLIFISIIANSFNLWFNKLGLYSALDYSLNVTLCVLTLFNLALTYLIKYTRQRIGFVGTFTYLWTSFSFFIGAILDWYLLFYNNSINEPLEERRIDDANISTFNENHTNSTENRDRSQYGSGSPTPTHRSQLVQNKHTLTEWVSIGFRNTIKFLILIFFALFTLNTLLTTLDTYRLTHKLPITVQSPSYEAFHYVDAAKTYQLHITCYGDVFDQENNTDLSENKKQPIILFEHGGYDTGYLSATWIEELYHLDKIQRYCLYDRPGYGLSDSPPAPISIAMVAESLRYALIKDAKIKGPFTTVGYDLGGLFTRVFTAKNVDIVDSMMLVESWHEELLLKNYIQRLLPPGRGDGDDGDDGNGNDGDGRNHDKTWLPSEIERHNEFRLWWKGIWSSLGWRLQTSWLLAHHGSKERIYGRDMKYQGRFLRSKFLESVTSSILSYRDVTNNAESLQNVKTSIVSSKEMVKKSALWGDWQRDLTKISHKTQEWKIVEGGHEIYKYGLGKQQTQEVLLRLIGELGKLTED</sequence>
<keyword id="KW-0472">Membrane</keyword>
<keyword id="KW-0597">Phosphoprotein</keyword>
<keyword id="KW-0812">Transmembrane</keyword>
<keyword id="KW-1133">Transmembrane helix</keyword>
<keyword id="KW-0926">Vacuole</keyword>
<evidence type="ECO:0000250" key="1"/>
<evidence type="ECO:0000250" key="2">
    <source>
        <dbReference type="UniProtKB" id="P53925"/>
    </source>
</evidence>
<evidence type="ECO:0000255" key="3"/>
<evidence type="ECO:0000256" key="4">
    <source>
        <dbReference type="SAM" id="MobiDB-lite"/>
    </source>
</evidence>
<dbReference type="EMBL" id="AAFW02000067">
    <property type="protein sequence ID" value="EDN62700.1"/>
    <property type="molecule type" value="Genomic_DNA"/>
</dbReference>
<dbReference type="EMBL" id="EF125227">
    <property type="protein sequence ID" value="ABN58641.1"/>
    <property type="molecule type" value="Genomic_DNA"/>
</dbReference>
<dbReference type="SMR" id="A6ZRW8"/>
<dbReference type="ESTHER" id="yeast-ynl5">
    <property type="family name" value="6_AlphaBeta_hydrolase"/>
</dbReference>
<dbReference type="HOGENOM" id="CLU_028296_0_0_1"/>
<dbReference type="OrthoDB" id="26910at4893"/>
<dbReference type="Proteomes" id="UP000007060">
    <property type="component" value="Unassembled WGS sequence"/>
</dbReference>
<dbReference type="GO" id="GO:0005783">
    <property type="term" value="C:endoplasmic reticulum"/>
    <property type="evidence" value="ECO:0007669"/>
    <property type="project" value="TreeGrafter"/>
</dbReference>
<dbReference type="GO" id="GO:0005774">
    <property type="term" value="C:vacuolar membrane"/>
    <property type="evidence" value="ECO:0007669"/>
    <property type="project" value="UniProtKB-SubCell"/>
</dbReference>
<dbReference type="GO" id="GO:0003824">
    <property type="term" value="F:catalytic activity"/>
    <property type="evidence" value="ECO:0007669"/>
    <property type="project" value="UniProtKB-ARBA"/>
</dbReference>
<dbReference type="Gene3D" id="3.40.50.1820">
    <property type="entry name" value="alpha/beta hydrolase"/>
    <property type="match status" value="1"/>
</dbReference>
<dbReference type="InterPro" id="IPR000073">
    <property type="entry name" value="AB_hydrolase_1"/>
</dbReference>
<dbReference type="InterPro" id="IPR029058">
    <property type="entry name" value="AB_hydrolase_fold"/>
</dbReference>
<dbReference type="InterPro" id="IPR019431">
    <property type="entry name" value="DUF2417"/>
</dbReference>
<dbReference type="InterPro" id="IPR052370">
    <property type="entry name" value="Meta-cleavage_hydrolase"/>
</dbReference>
<dbReference type="PANTHER" id="PTHR43139">
    <property type="entry name" value="SI:DKEY-122A22.2"/>
    <property type="match status" value="1"/>
</dbReference>
<dbReference type="PANTHER" id="PTHR43139:SF52">
    <property type="entry name" value="SI:DKEY-122A22.2"/>
    <property type="match status" value="1"/>
</dbReference>
<dbReference type="Pfam" id="PF00561">
    <property type="entry name" value="Abhydrolase_1"/>
    <property type="match status" value="1"/>
</dbReference>
<dbReference type="Pfam" id="PF10329">
    <property type="entry name" value="DUF2417"/>
    <property type="match status" value="1"/>
</dbReference>
<dbReference type="SUPFAM" id="SSF53474">
    <property type="entry name" value="alpha/beta-Hydrolases"/>
    <property type="match status" value="1"/>
</dbReference>
<accession>A6ZRW8</accession>
<accession>B0KZS0</accession>